<name>PYRB_LISMO</name>
<feature type="chain" id="PRO_0000113157" description="Aspartate carbamoyltransferase catalytic subunit">
    <location>
        <begin position="1"/>
        <end position="303"/>
    </location>
</feature>
<feature type="binding site" evidence="1">
    <location>
        <position position="49"/>
    </location>
    <ligand>
        <name>carbamoyl phosphate</name>
        <dbReference type="ChEBI" id="CHEBI:58228"/>
    </ligand>
</feature>
<feature type="binding site" evidence="1">
    <location>
        <position position="50"/>
    </location>
    <ligand>
        <name>carbamoyl phosphate</name>
        <dbReference type="ChEBI" id="CHEBI:58228"/>
    </ligand>
</feature>
<feature type="binding site" evidence="1">
    <location>
        <position position="77"/>
    </location>
    <ligand>
        <name>L-aspartate</name>
        <dbReference type="ChEBI" id="CHEBI:29991"/>
    </ligand>
</feature>
<feature type="binding site" evidence="1">
    <location>
        <position position="99"/>
    </location>
    <ligand>
        <name>carbamoyl phosphate</name>
        <dbReference type="ChEBI" id="CHEBI:58228"/>
    </ligand>
</feature>
<feature type="binding site" evidence="1">
    <location>
        <position position="126"/>
    </location>
    <ligand>
        <name>carbamoyl phosphate</name>
        <dbReference type="ChEBI" id="CHEBI:58228"/>
    </ligand>
</feature>
<feature type="binding site" evidence="1">
    <location>
        <position position="129"/>
    </location>
    <ligand>
        <name>carbamoyl phosphate</name>
        <dbReference type="ChEBI" id="CHEBI:58228"/>
    </ligand>
</feature>
<feature type="binding site" evidence="1">
    <location>
        <position position="159"/>
    </location>
    <ligand>
        <name>L-aspartate</name>
        <dbReference type="ChEBI" id="CHEBI:29991"/>
    </ligand>
</feature>
<feature type="binding site" evidence="1">
    <location>
        <position position="211"/>
    </location>
    <ligand>
        <name>L-aspartate</name>
        <dbReference type="ChEBI" id="CHEBI:29991"/>
    </ligand>
</feature>
<feature type="binding site" evidence="1">
    <location>
        <position position="252"/>
    </location>
    <ligand>
        <name>carbamoyl phosphate</name>
        <dbReference type="ChEBI" id="CHEBI:58228"/>
    </ligand>
</feature>
<feature type="binding site" evidence="1">
    <location>
        <position position="253"/>
    </location>
    <ligand>
        <name>carbamoyl phosphate</name>
        <dbReference type="ChEBI" id="CHEBI:58228"/>
    </ligand>
</feature>
<dbReference type="EC" id="2.1.3.2" evidence="1"/>
<dbReference type="EMBL" id="AL591981">
    <property type="protein sequence ID" value="CAC99916.1"/>
    <property type="molecule type" value="Genomic_DNA"/>
</dbReference>
<dbReference type="PIR" id="AF1304">
    <property type="entry name" value="AF1304"/>
</dbReference>
<dbReference type="RefSeq" id="NP_465363.1">
    <property type="nucleotide sequence ID" value="NC_003210.1"/>
</dbReference>
<dbReference type="RefSeq" id="WP_003723082.1">
    <property type="nucleotide sequence ID" value="NZ_CP149495.1"/>
</dbReference>
<dbReference type="SMR" id="Q8Y662"/>
<dbReference type="STRING" id="169963.gene:17594523"/>
<dbReference type="PaxDb" id="169963-lmo1838"/>
<dbReference type="EnsemblBacteria" id="CAC99916">
    <property type="protein sequence ID" value="CAC99916"/>
    <property type="gene ID" value="CAC99916"/>
</dbReference>
<dbReference type="GeneID" id="985866"/>
<dbReference type="KEGG" id="lmo:lmo1838"/>
<dbReference type="PATRIC" id="fig|169963.11.peg.1883"/>
<dbReference type="eggNOG" id="COG0540">
    <property type="taxonomic scope" value="Bacteria"/>
</dbReference>
<dbReference type="HOGENOM" id="CLU_043846_2_1_9"/>
<dbReference type="OrthoDB" id="9774690at2"/>
<dbReference type="PhylomeDB" id="Q8Y662"/>
<dbReference type="BioCyc" id="LMON169963:LMO1838-MONOMER"/>
<dbReference type="UniPathway" id="UPA00070">
    <property type="reaction ID" value="UER00116"/>
</dbReference>
<dbReference type="Proteomes" id="UP000000817">
    <property type="component" value="Chromosome"/>
</dbReference>
<dbReference type="GO" id="GO:0016597">
    <property type="term" value="F:amino acid binding"/>
    <property type="evidence" value="ECO:0007669"/>
    <property type="project" value="InterPro"/>
</dbReference>
<dbReference type="GO" id="GO:0004070">
    <property type="term" value="F:aspartate carbamoyltransferase activity"/>
    <property type="evidence" value="ECO:0007669"/>
    <property type="project" value="UniProtKB-UniRule"/>
</dbReference>
<dbReference type="GO" id="GO:0006207">
    <property type="term" value="P:'de novo' pyrimidine nucleobase biosynthetic process"/>
    <property type="evidence" value="ECO:0007669"/>
    <property type="project" value="InterPro"/>
</dbReference>
<dbReference type="GO" id="GO:0044205">
    <property type="term" value="P:'de novo' UMP biosynthetic process"/>
    <property type="evidence" value="ECO:0007669"/>
    <property type="project" value="UniProtKB-UniRule"/>
</dbReference>
<dbReference type="GO" id="GO:0006520">
    <property type="term" value="P:amino acid metabolic process"/>
    <property type="evidence" value="ECO:0007669"/>
    <property type="project" value="InterPro"/>
</dbReference>
<dbReference type="FunFam" id="3.40.50.1370:FF:000011">
    <property type="entry name" value="Aspartate carbamoyltransferase"/>
    <property type="match status" value="1"/>
</dbReference>
<dbReference type="Gene3D" id="3.40.50.1370">
    <property type="entry name" value="Aspartate/ornithine carbamoyltransferase"/>
    <property type="match status" value="2"/>
</dbReference>
<dbReference type="HAMAP" id="MF_00001">
    <property type="entry name" value="Asp_carb_tr"/>
    <property type="match status" value="1"/>
</dbReference>
<dbReference type="InterPro" id="IPR006132">
    <property type="entry name" value="Asp/Orn_carbamoyltranf_P-bd"/>
</dbReference>
<dbReference type="InterPro" id="IPR006130">
    <property type="entry name" value="Asp/Orn_carbamoylTrfase"/>
</dbReference>
<dbReference type="InterPro" id="IPR036901">
    <property type="entry name" value="Asp/Orn_carbamoylTrfase_sf"/>
</dbReference>
<dbReference type="InterPro" id="IPR002082">
    <property type="entry name" value="Asp_carbamoyltransf"/>
</dbReference>
<dbReference type="InterPro" id="IPR006131">
    <property type="entry name" value="Asp_carbamoyltransf_Asp/Orn-bd"/>
</dbReference>
<dbReference type="NCBIfam" id="TIGR00670">
    <property type="entry name" value="asp_carb_tr"/>
    <property type="match status" value="1"/>
</dbReference>
<dbReference type="NCBIfam" id="NF002032">
    <property type="entry name" value="PRK00856.1"/>
    <property type="match status" value="1"/>
</dbReference>
<dbReference type="PANTHER" id="PTHR45753:SF6">
    <property type="entry name" value="ASPARTATE CARBAMOYLTRANSFERASE"/>
    <property type="match status" value="1"/>
</dbReference>
<dbReference type="PANTHER" id="PTHR45753">
    <property type="entry name" value="ORNITHINE CARBAMOYLTRANSFERASE, MITOCHONDRIAL"/>
    <property type="match status" value="1"/>
</dbReference>
<dbReference type="Pfam" id="PF00185">
    <property type="entry name" value="OTCace"/>
    <property type="match status" value="1"/>
</dbReference>
<dbReference type="Pfam" id="PF02729">
    <property type="entry name" value="OTCace_N"/>
    <property type="match status" value="1"/>
</dbReference>
<dbReference type="PRINTS" id="PR00100">
    <property type="entry name" value="AOTCASE"/>
</dbReference>
<dbReference type="PRINTS" id="PR00101">
    <property type="entry name" value="ATCASE"/>
</dbReference>
<dbReference type="SUPFAM" id="SSF53671">
    <property type="entry name" value="Aspartate/ornithine carbamoyltransferase"/>
    <property type="match status" value="1"/>
</dbReference>
<dbReference type="PROSITE" id="PS00097">
    <property type="entry name" value="CARBAMOYLTRANSFERASE"/>
    <property type="match status" value="1"/>
</dbReference>
<gene>
    <name evidence="1" type="primary">pyrB</name>
    <name type="ordered locus">lmo1838</name>
</gene>
<sequence length="303" mass="34212">MKNLLSMEALTVHEIEHLLEQAAQFKRGKKATFNEQTFAVNMFFEPSTRTHTSFEVAEKKLGVEVVSFDAASSSMTKGETLYDTLLTMQAVGVNVAVIRHSEENYYAGLEKLDIAIVNGGDGCGEHPSQSLLDLFTIKEQFGTFQGLKVAIAGDIRHSRVANSNMKVLKRLGAELFFSGPREWFDESYLAYGTYLPVDEIVEKVDVMMLLRVQHERHSGTDEFTKESYHEKFGLTEDRAKKLKEDAIIMHPSPVNRDVEIADSLVESEKSRIVTQMTNGVFIRMAILEAILKEQEMRAKLCTY</sequence>
<keyword id="KW-0665">Pyrimidine biosynthesis</keyword>
<keyword id="KW-1185">Reference proteome</keyword>
<keyword id="KW-0808">Transferase</keyword>
<reference key="1">
    <citation type="journal article" date="2001" name="Science">
        <title>Comparative genomics of Listeria species.</title>
        <authorList>
            <person name="Glaser P."/>
            <person name="Frangeul L."/>
            <person name="Buchrieser C."/>
            <person name="Rusniok C."/>
            <person name="Amend A."/>
            <person name="Baquero F."/>
            <person name="Berche P."/>
            <person name="Bloecker H."/>
            <person name="Brandt P."/>
            <person name="Chakraborty T."/>
            <person name="Charbit A."/>
            <person name="Chetouani F."/>
            <person name="Couve E."/>
            <person name="de Daruvar A."/>
            <person name="Dehoux P."/>
            <person name="Domann E."/>
            <person name="Dominguez-Bernal G."/>
            <person name="Duchaud E."/>
            <person name="Durant L."/>
            <person name="Dussurget O."/>
            <person name="Entian K.-D."/>
            <person name="Fsihi H."/>
            <person name="Garcia-del Portillo F."/>
            <person name="Garrido P."/>
            <person name="Gautier L."/>
            <person name="Goebel W."/>
            <person name="Gomez-Lopez N."/>
            <person name="Hain T."/>
            <person name="Hauf J."/>
            <person name="Jackson D."/>
            <person name="Jones L.-M."/>
            <person name="Kaerst U."/>
            <person name="Kreft J."/>
            <person name="Kuhn M."/>
            <person name="Kunst F."/>
            <person name="Kurapkat G."/>
            <person name="Madueno E."/>
            <person name="Maitournam A."/>
            <person name="Mata Vicente J."/>
            <person name="Ng E."/>
            <person name="Nedjari H."/>
            <person name="Nordsiek G."/>
            <person name="Novella S."/>
            <person name="de Pablos B."/>
            <person name="Perez-Diaz J.-C."/>
            <person name="Purcell R."/>
            <person name="Remmel B."/>
            <person name="Rose M."/>
            <person name="Schlueter T."/>
            <person name="Simoes N."/>
            <person name="Tierrez A."/>
            <person name="Vazquez-Boland J.-A."/>
            <person name="Voss H."/>
            <person name="Wehland J."/>
            <person name="Cossart P."/>
        </authorList>
    </citation>
    <scope>NUCLEOTIDE SEQUENCE [LARGE SCALE GENOMIC DNA]</scope>
    <source>
        <strain>ATCC BAA-679 / EGD-e</strain>
    </source>
</reference>
<protein>
    <recommendedName>
        <fullName evidence="1">Aspartate carbamoyltransferase catalytic subunit</fullName>
        <ecNumber evidence="1">2.1.3.2</ecNumber>
    </recommendedName>
    <alternativeName>
        <fullName evidence="1">Aspartate transcarbamylase</fullName>
        <shortName evidence="1">ATCase</shortName>
    </alternativeName>
</protein>
<evidence type="ECO:0000255" key="1">
    <source>
        <dbReference type="HAMAP-Rule" id="MF_00001"/>
    </source>
</evidence>
<accession>Q8Y662</accession>
<proteinExistence type="inferred from homology"/>
<comment type="function">
    <text evidence="1">Catalyzes the condensation of carbamoyl phosphate and aspartate to form carbamoyl aspartate and inorganic phosphate, the committed step in the de novo pyrimidine nucleotide biosynthesis pathway.</text>
</comment>
<comment type="catalytic activity">
    <reaction evidence="1">
        <text>carbamoyl phosphate + L-aspartate = N-carbamoyl-L-aspartate + phosphate + H(+)</text>
        <dbReference type="Rhea" id="RHEA:20013"/>
        <dbReference type="ChEBI" id="CHEBI:15378"/>
        <dbReference type="ChEBI" id="CHEBI:29991"/>
        <dbReference type="ChEBI" id="CHEBI:32814"/>
        <dbReference type="ChEBI" id="CHEBI:43474"/>
        <dbReference type="ChEBI" id="CHEBI:58228"/>
        <dbReference type="EC" id="2.1.3.2"/>
    </reaction>
</comment>
<comment type="pathway">
    <text evidence="1">Pyrimidine metabolism; UMP biosynthesis via de novo pathway; (S)-dihydroorotate from bicarbonate: step 2/3.</text>
</comment>
<comment type="subunit">
    <text evidence="1">Heterododecamer (2C3:3R2) of six catalytic PyrB chains organized as two trimers (C3), and six regulatory PyrI chains organized as three dimers (R2).</text>
</comment>
<comment type="similarity">
    <text evidence="1">Belongs to the aspartate/ornithine carbamoyltransferase superfamily. ATCase family.</text>
</comment>
<organism>
    <name type="scientific">Listeria monocytogenes serovar 1/2a (strain ATCC BAA-679 / EGD-e)</name>
    <dbReference type="NCBI Taxonomy" id="169963"/>
    <lineage>
        <taxon>Bacteria</taxon>
        <taxon>Bacillati</taxon>
        <taxon>Bacillota</taxon>
        <taxon>Bacilli</taxon>
        <taxon>Bacillales</taxon>
        <taxon>Listeriaceae</taxon>
        <taxon>Listeria</taxon>
    </lineage>
</organism>